<keyword id="KW-0067">ATP-binding</keyword>
<keyword id="KW-0963">Cytoplasm</keyword>
<keyword id="KW-0903">Direct protein sequencing</keyword>
<keyword id="KW-0378">Hydrolase</keyword>
<keyword id="KW-1017">Isopeptide bond</keyword>
<keyword id="KW-0460">Magnesium</keyword>
<keyword id="KW-0479">Metal-binding</keyword>
<keyword id="KW-0547">Nucleotide-binding</keyword>
<keyword id="KW-0597">Phosphoprotein</keyword>
<keyword id="KW-1185">Reference proteome</keyword>
<keyword id="KW-0832">Ubl conjugation</keyword>
<comment type="function">
    <text evidence="2 8">Hydrolyzes ATP, and can also hydrolyze GTP with lower efficiency. Has lower affinity for GTP.</text>
</comment>
<comment type="cofactor">
    <cofactor evidence="1">
        <name>Mg(2+)</name>
        <dbReference type="ChEBI" id="CHEBI:18420"/>
    </cofactor>
</comment>
<comment type="subunit">
    <text evidence="2 7">Monomer (By similarity). Interacts with the 26S proteasome subunit RPT6.</text>
</comment>
<comment type="subcellular location">
    <subcellularLocation>
        <location evidence="2 4 5">Cytoplasm</location>
    </subcellularLocation>
</comment>
<comment type="induction">
    <text evidence="9 10">By hydrogen peroxide and during DNA replication stress.</text>
</comment>
<comment type="miscellaneous">
    <text evidence="6">Present with 36803 molecules/cell in log phase SD medium.</text>
</comment>
<comment type="similarity">
    <text evidence="2">Belongs to the TRAFAC class OBG-HflX-like GTPase superfamily. OBG GTPase family. YchF/OLA1 subfamily.</text>
</comment>
<protein>
    <recommendedName>
        <fullName evidence="2">Obg-like ATPase 1</fullName>
    </recommendedName>
</protein>
<reference key="1">
    <citation type="journal article" date="1994" name="Yeast">
        <title>The complete sequence of a 33 kb fragment on the right arm of chromosome II from Saccharomyces cerevisiae reveals 16 open reading frames, including ten new open reading frames, five previously identified genes and a homologue of the SCO1 gene.</title>
        <authorList>
            <person name="Smits P.H.M."/>
            <person name="de Haan M."/>
            <person name="Maat C."/>
            <person name="Grivell L.A."/>
        </authorList>
    </citation>
    <scope>NUCLEOTIDE SEQUENCE [GENOMIC DNA]</scope>
    <source>
        <strain>ATCC 204508 / S288c</strain>
    </source>
</reference>
<reference key="2">
    <citation type="journal article" date="1994" name="EMBO J.">
        <title>Complete DNA sequence of yeast chromosome II.</title>
        <authorList>
            <person name="Feldmann H."/>
            <person name="Aigle M."/>
            <person name="Aljinovic G."/>
            <person name="Andre B."/>
            <person name="Baclet M.C."/>
            <person name="Barthe C."/>
            <person name="Baur A."/>
            <person name="Becam A.-M."/>
            <person name="Biteau N."/>
            <person name="Boles E."/>
            <person name="Brandt T."/>
            <person name="Brendel M."/>
            <person name="Brueckner M."/>
            <person name="Bussereau F."/>
            <person name="Christiansen C."/>
            <person name="Contreras R."/>
            <person name="Crouzet M."/>
            <person name="Cziepluch C."/>
            <person name="Demolis N."/>
            <person name="Delaveau T."/>
            <person name="Doignon F."/>
            <person name="Domdey H."/>
            <person name="Duesterhus S."/>
            <person name="Dubois E."/>
            <person name="Dujon B."/>
            <person name="El Bakkoury M."/>
            <person name="Entian K.-D."/>
            <person name="Feuermann M."/>
            <person name="Fiers W."/>
            <person name="Fobo G.M."/>
            <person name="Fritz C."/>
            <person name="Gassenhuber J."/>
            <person name="Glansdorff N."/>
            <person name="Goffeau A."/>
            <person name="Grivell L.A."/>
            <person name="de Haan M."/>
            <person name="Hein C."/>
            <person name="Herbert C.J."/>
            <person name="Hollenberg C.P."/>
            <person name="Holmstroem K."/>
            <person name="Jacq C."/>
            <person name="Jacquet M."/>
            <person name="Jauniaux J.-C."/>
            <person name="Jonniaux J.-L."/>
            <person name="Kallesoee T."/>
            <person name="Kiesau P."/>
            <person name="Kirchrath L."/>
            <person name="Koetter P."/>
            <person name="Korol S."/>
            <person name="Liebl S."/>
            <person name="Logghe M."/>
            <person name="Lohan A.J.E."/>
            <person name="Louis E.J."/>
            <person name="Li Z.Y."/>
            <person name="Maat M.J."/>
            <person name="Mallet L."/>
            <person name="Mannhaupt G."/>
            <person name="Messenguy F."/>
            <person name="Miosga T."/>
            <person name="Molemans F."/>
            <person name="Mueller S."/>
            <person name="Nasr F."/>
            <person name="Obermaier B."/>
            <person name="Perea J."/>
            <person name="Pierard A."/>
            <person name="Piravandi E."/>
            <person name="Pohl F.M."/>
            <person name="Pohl T.M."/>
            <person name="Potier S."/>
            <person name="Proft M."/>
            <person name="Purnelle B."/>
            <person name="Ramezani Rad M."/>
            <person name="Rieger M."/>
            <person name="Rose M."/>
            <person name="Schaaff-Gerstenschlaeger I."/>
            <person name="Scherens B."/>
            <person name="Schwarzlose C."/>
            <person name="Skala J."/>
            <person name="Slonimski P.P."/>
            <person name="Smits P.H.M."/>
            <person name="Souciet J.-L."/>
            <person name="Steensma H.Y."/>
            <person name="Stucka R."/>
            <person name="Urrestarazu L.A."/>
            <person name="van der Aart Q.J.M."/>
            <person name="Van Dyck L."/>
            <person name="Vassarotti A."/>
            <person name="Vetter I."/>
            <person name="Vierendeels F."/>
            <person name="Vissers S."/>
            <person name="Wagner G."/>
            <person name="de Wergifosse P."/>
            <person name="Wolfe K.H."/>
            <person name="Zagulski M."/>
            <person name="Zimmermann F.K."/>
            <person name="Mewes H.-W."/>
            <person name="Kleine K."/>
        </authorList>
    </citation>
    <scope>NUCLEOTIDE SEQUENCE [LARGE SCALE GENOMIC DNA]</scope>
    <source>
        <strain>ATCC 204508 / S288c</strain>
    </source>
</reference>
<reference key="3">
    <citation type="journal article" date="2014" name="G3 (Bethesda)">
        <title>The reference genome sequence of Saccharomyces cerevisiae: Then and now.</title>
        <authorList>
            <person name="Engel S.R."/>
            <person name="Dietrich F.S."/>
            <person name="Fisk D.G."/>
            <person name="Binkley G."/>
            <person name="Balakrishnan R."/>
            <person name="Costanzo M.C."/>
            <person name="Dwight S.S."/>
            <person name="Hitz B.C."/>
            <person name="Karra K."/>
            <person name="Nash R.S."/>
            <person name="Weng S."/>
            <person name="Wong E.D."/>
            <person name="Lloyd P."/>
            <person name="Skrzypek M.S."/>
            <person name="Miyasato S.R."/>
            <person name="Simison M."/>
            <person name="Cherry J.M."/>
        </authorList>
    </citation>
    <scope>GENOME REANNOTATION</scope>
    <source>
        <strain>ATCC 204508 / S288c</strain>
    </source>
</reference>
<reference key="4">
    <citation type="submission" date="2005-06" db="UniProtKB">
        <authorList>
            <person name="Bienvenut W.V."/>
            <person name="Peters C."/>
        </authorList>
    </citation>
    <scope>PROTEIN SEQUENCE OF 99-125 AND 144-153</scope>
    <scope>IDENTIFICATION BY MASS SPECTROMETRY</scope>
</reference>
<reference key="5">
    <citation type="journal article" date="1998" name="J. Biol. Chem.">
        <title>The H2O2 stimulon in Saccharomyces cerevisiae.</title>
        <authorList>
            <person name="Godon C."/>
            <person name="Lagniel G."/>
            <person name="Lee J."/>
            <person name="Buhler J.-M."/>
            <person name="Kieffer S."/>
            <person name="Perrot M."/>
            <person name="Boucherie H."/>
            <person name="Toledano M.B."/>
            <person name="Labarre J."/>
        </authorList>
    </citation>
    <scope>INDUCTION</scope>
</reference>
<reference key="6">
    <citation type="journal article" date="2000" name="J. Cell Biol.">
        <title>The yeast nuclear pore complex: composition, architecture, and transport mechanism.</title>
        <authorList>
            <person name="Rout M.P."/>
            <person name="Aitchison J.D."/>
            <person name="Suprapto A."/>
            <person name="Hjertaas K."/>
            <person name="Zhao Y."/>
            <person name="Chait B.T."/>
        </authorList>
    </citation>
    <scope>IDENTIFICATION BY MASS SPECTROMETRY</scope>
    <scope>SUBCELLULAR LOCATION</scope>
</reference>
<reference key="7">
    <citation type="journal article" date="2003" name="Nature">
        <title>Global analysis of protein localization in budding yeast.</title>
        <authorList>
            <person name="Huh W.-K."/>
            <person name="Falvo J.V."/>
            <person name="Gerke L.C."/>
            <person name="Carroll A.S."/>
            <person name="Howson R.W."/>
            <person name="Weissman J.S."/>
            <person name="O'Shea E.K."/>
        </authorList>
    </citation>
    <scope>SUBCELLULAR LOCATION [LARGE SCALE ANALYSIS]</scope>
</reference>
<reference key="8">
    <citation type="journal article" date="2003" name="Nature">
        <title>Global analysis of protein expression in yeast.</title>
        <authorList>
            <person name="Ghaemmaghami S."/>
            <person name="Huh W.-K."/>
            <person name="Bower K."/>
            <person name="Howson R.W."/>
            <person name="Belle A."/>
            <person name="Dephoure N."/>
            <person name="O'Shea E.K."/>
            <person name="Weissman J.S."/>
        </authorList>
    </citation>
    <scope>LEVEL OF PROTEIN EXPRESSION [LARGE SCALE ANALYSIS]</scope>
</reference>
<reference key="9">
    <citation type="journal article" date="2006" name="Mol. Cell. Proteomics">
        <title>An integrated mass spectrometry-based proteomic approach: quantitative analysis of tandem affinity-purified in vivo cross-linked protein complexes (QTAX) to decipher the 26 S proteasome-interacting network.</title>
        <authorList>
            <person name="Guerrero C."/>
            <person name="Tagwerker C."/>
            <person name="Kaiser P."/>
            <person name="Huang L."/>
        </authorList>
    </citation>
    <scope>IDENTIFICATION BY MASS SPECTROMETRY</scope>
    <scope>INTERACTION WITH RPT6</scope>
</reference>
<reference key="10">
    <citation type="journal article" date="2007" name="J. Biol. Chem.">
        <title>Human OLA1 defines an ATPase subfamily in the Obg family of GTP-binding proteins.</title>
        <authorList>
            <person name="Koller-Eichhorn R."/>
            <person name="Marquardt T."/>
            <person name="Gail R."/>
            <person name="Wittinghofer A."/>
            <person name="Kostrewa D."/>
            <person name="Kutay U."/>
            <person name="Kambach C."/>
        </authorList>
    </citation>
    <scope>FUNCTION</scope>
    <scope>ATPASE ACTIVITY</scope>
</reference>
<reference key="11">
    <citation type="journal article" date="2008" name="Mol. Cell. Proteomics">
        <title>A multidimensional chromatography technology for in-depth phosphoproteome analysis.</title>
        <authorList>
            <person name="Albuquerque C.P."/>
            <person name="Smolka M.B."/>
            <person name="Payne S.H."/>
            <person name="Bafna V."/>
            <person name="Eng J."/>
            <person name="Zhou H."/>
        </authorList>
    </citation>
    <scope>PHOSPHORYLATION [LARGE SCALE ANALYSIS] AT THR-89</scope>
    <scope>IDENTIFICATION BY MASS SPECTROMETRY [LARGE SCALE ANALYSIS]</scope>
</reference>
<reference key="12">
    <citation type="journal article" date="2009" name="Science">
        <title>Global analysis of Cdk1 substrate phosphorylation sites provides insights into evolution.</title>
        <authorList>
            <person name="Holt L.J."/>
            <person name="Tuch B.B."/>
            <person name="Villen J."/>
            <person name="Johnson A.D."/>
            <person name="Gygi S.P."/>
            <person name="Morgan D.O."/>
        </authorList>
    </citation>
    <scope>PHOSPHORYLATION [LARGE SCALE ANALYSIS] AT SER-116 AND SER-119</scope>
    <scope>IDENTIFICATION BY MASS SPECTROMETRY [LARGE SCALE ANALYSIS]</scope>
</reference>
<reference key="13">
    <citation type="journal article" date="2012" name="Nat. Cell Biol.">
        <title>Dissecting DNA damage response pathways by analysing protein localization and abundance changes during DNA replication stress.</title>
        <authorList>
            <person name="Tkach J.M."/>
            <person name="Yimit A."/>
            <person name="Lee A.Y."/>
            <person name="Riffle M."/>
            <person name="Costanzo M."/>
            <person name="Jaschob D."/>
            <person name="Hendry J.A."/>
            <person name="Ou J."/>
            <person name="Moffat J."/>
            <person name="Boone C."/>
            <person name="Davis T.N."/>
            <person name="Nislow C."/>
            <person name="Brown G.W."/>
        </authorList>
    </citation>
    <scope>INDUCTION</scope>
</reference>
<reference key="14">
    <citation type="journal article" date="2012" name="Proteomics">
        <title>Sites of ubiquitin attachment in Saccharomyces cerevisiae.</title>
        <authorList>
            <person name="Starita L.M."/>
            <person name="Lo R.S."/>
            <person name="Eng J.K."/>
            <person name="von Haller P.D."/>
            <person name="Fields S."/>
        </authorList>
    </citation>
    <scope>UBIQUITINATION [LARGE SCALE ANALYSIS] AT LYS-98</scope>
    <scope>IDENTIFICATION BY MASS SPECTROMETRY [LARGE SCALE ANALYSIS]</scope>
</reference>
<proteinExistence type="evidence at protein level"/>
<organism>
    <name type="scientific">Saccharomyces cerevisiae (strain ATCC 204508 / S288c)</name>
    <name type="common">Baker's yeast</name>
    <dbReference type="NCBI Taxonomy" id="559292"/>
    <lineage>
        <taxon>Eukaryota</taxon>
        <taxon>Fungi</taxon>
        <taxon>Dikarya</taxon>
        <taxon>Ascomycota</taxon>
        <taxon>Saccharomycotina</taxon>
        <taxon>Saccharomycetes</taxon>
        <taxon>Saccharomycetales</taxon>
        <taxon>Saccharomycetaceae</taxon>
        <taxon>Saccharomyces</taxon>
    </lineage>
</organism>
<evidence type="ECO:0000250" key="1"/>
<evidence type="ECO:0000255" key="2">
    <source>
        <dbReference type="HAMAP-Rule" id="MF_03167"/>
    </source>
</evidence>
<evidence type="ECO:0000255" key="3">
    <source>
        <dbReference type="PROSITE-ProRule" id="PRU01228"/>
    </source>
</evidence>
<evidence type="ECO:0000269" key="4">
    <source>
    </source>
</evidence>
<evidence type="ECO:0000269" key="5">
    <source>
    </source>
</evidence>
<evidence type="ECO:0000269" key="6">
    <source>
    </source>
</evidence>
<evidence type="ECO:0000269" key="7">
    <source>
    </source>
</evidence>
<evidence type="ECO:0000269" key="8">
    <source>
    </source>
</evidence>
<evidence type="ECO:0000269" key="9">
    <source>
    </source>
</evidence>
<evidence type="ECO:0000269" key="10">
    <source>
    </source>
</evidence>
<evidence type="ECO:0007744" key="11">
    <source>
    </source>
</evidence>
<evidence type="ECO:0007744" key="12">
    <source>
    </source>
</evidence>
<evidence type="ECO:0007744" key="13">
    <source>
    </source>
</evidence>
<dbReference type="EMBL" id="X76078">
    <property type="protein sequence ID" value="CAA53682.1"/>
    <property type="molecule type" value="Genomic_DNA"/>
</dbReference>
<dbReference type="EMBL" id="Z35894">
    <property type="protein sequence ID" value="CAA84967.1"/>
    <property type="molecule type" value="Genomic_DNA"/>
</dbReference>
<dbReference type="EMBL" id="BK006936">
    <property type="protein sequence ID" value="DAA07147.1"/>
    <property type="molecule type" value="Genomic_DNA"/>
</dbReference>
<dbReference type="PIR" id="S45881">
    <property type="entry name" value="S45881"/>
</dbReference>
<dbReference type="RefSeq" id="NP_009581.1">
    <property type="nucleotide sequence ID" value="NM_001178373.1"/>
</dbReference>
<dbReference type="SMR" id="P38219"/>
<dbReference type="BioGRID" id="32728">
    <property type="interactions" value="197"/>
</dbReference>
<dbReference type="DIP" id="DIP-4893N"/>
<dbReference type="FunCoup" id="P38219">
    <property type="interactions" value="1289"/>
</dbReference>
<dbReference type="IntAct" id="P38219">
    <property type="interactions" value="63"/>
</dbReference>
<dbReference type="MINT" id="P38219"/>
<dbReference type="STRING" id="4932.YBR025C"/>
<dbReference type="CarbonylDB" id="P38219"/>
<dbReference type="iPTMnet" id="P38219"/>
<dbReference type="PaxDb" id="4932-YBR025C"/>
<dbReference type="PeptideAtlas" id="P38219"/>
<dbReference type="EnsemblFungi" id="YBR025C_mRNA">
    <property type="protein sequence ID" value="YBR025C"/>
    <property type="gene ID" value="YBR025C"/>
</dbReference>
<dbReference type="GeneID" id="852313"/>
<dbReference type="KEGG" id="sce:YBR025C"/>
<dbReference type="AGR" id="SGD:S000000229"/>
<dbReference type="SGD" id="S000000229">
    <property type="gene designation" value="OLA1"/>
</dbReference>
<dbReference type="VEuPathDB" id="FungiDB:YBR025C"/>
<dbReference type="eggNOG" id="KOG1491">
    <property type="taxonomic scope" value="Eukaryota"/>
</dbReference>
<dbReference type="GeneTree" id="ENSGT00390000000673"/>
<dbReference type="HOGENOM" id="CLU_018395_1_2_1"/>
<dbReference type="InParanoid" id="P38219"/>
<dbReference type="OMA" id="VLRCFDN"/>
<dbReference type="OrthoDB" id="424823at2759"/>
<dbReference type="BioCyc" id="YEAST:G3O-29005-MONOMER"/>
<dbReference type="Reactome" id="R-SCE-114608">
    <property type="pathway name" value="Platelet degranulation"/>
</dbReference>
<dbReference type="BioGRID-ORCS" id="852313">
    <property type="hits" value="7 hits in 10 CRISPR screens"/>
</dbReference>
<dbReference type="CD-CODE" id="E03F929F">
    <property type="entry name" value="Stress granule"/>
</dbReference>
<dbReference type="PRO" id="PR:P38219"/>
<dbReference type="Proteomes" id="UP000002311">
    <property type="component" value="Chromosome II"/>
</dbReference>
<dbReference type="RNAct" id="P38219">
    <property type="molecule type" value="protein"/>
</dbReference>
<dbReference type="GO" id="GO:0005737">
    <property type="term" value="C:cytoplasm"/>
    <property type="evidence" value="ECO:0000314"/>
    <property type="project" value="SGD"/>
</dbReference>
<dbReference type="GO" id="GO:0010494">
    <property type="term" value="C:cytoplasmic stress granule"/>
    <property type="evidence" value="ECO:0000314"/>
    <property type="project" value="SGD"/>
</dbReference>
<dbReference type="GO" id="GO:0005524">
    <property type="term" value="F:ATP binding"/>
    <property type="evidence" value="ECO:0007669"/>
    <property type="project" value="UniProtKB-UniRule"/>
</dbReference>
<dbReference type="GO" id="GO:0016887">
    <property type="term" value="F:ATP hydrolysis activity"/>
    <property type="evidence" value="ECO:0000314"/>
    <property type="project" value="SGD"/>
</dbReference>
<dbReference type="GO" id="GO:0005525">
    <property type="term" value="F:GTP binding"/>
    <property type="evidence" value="ECO:0007669"/>
    <property type="project" value="InterPro"/>
</dbReference>
<dbReference type="GO" id="GO:0046872">
    <property type="term" value="F:metal ion binding"/>
    <property type="evidence" value="ECO:0007669"/>
    <property type="project" value="UniProtKB-KW"/>
</dbReference>
<dbReference type="GO" id="GO:0043023">
    <property type="term" value="F:ribosomal large subunit binding"/>
    <property type="evidence" value="ECO:0007669"/>
    <property type="project" value="UniProtKB-UniRule"/>
</dbReference>
<dbReference type="GO" id="GO:1900036">
    <property type="term" value="P:positive regulation of cellular response to heat"/>
    <property type="evidence" value="ECO:0000315"/>
    <property type="project" value="SGD"/>
</dbReference>
<dbReference type="CDD" id="cd04867">
    <property type="entry name" value="TGS_YchF_OLA1"/>
    <property type="match status" value="1"/>
</dbReference>
<dbReference type="CDD" id="cd01900">
    <property type="entry name" value="YchF"/>
    <property type="match status" value="1"/>
</dbReference>
<dbReference type="FunFam" id="1.10.150.300:FF:000001">
    <property type="entry name" value="Ribosome-binding ATPase YchF"/>
    <property type="match status" value="1"/>
</dbReference>
<dbReference type="FunFam" id="3.10.20.30:FF:000001">
    <property type="entry name" value="Ribosome-binding ATPase YchF"/>
    <property type="match status" value="1"/>
</dbReference>
<dbReference type="Gene3D" id="3.10.20.30">
    <property type="match status" value="1"/>
</dbReference>
<dbReference type="Gene3D" id="3.40.50.300">
    <property type="entry name" value="P-loop containing nucleotide triphosphate hydrolases"/>
    <property type="match status" value="1"/>
</dbReference>
<dbReference type="Gene3D" id="1.10.150.300">
    <property type="entry name" value="TGS-like domain"/>
    <property type="match status" value="1"/>
</dbReference>
<dbReference type="HAMAP" id="MF_00944">
    <property type="entry name" value="YchF_OLA1_ATPase"/>
    <property type="match status" value="1"/>
</dbReference>
<dbReference type="InterPro" id="IPR004396">
    <property type="entry name" value="ATPase_YchF/OLA1"/>
</dbReference>
<dbReference type="InterPro" id="IPR012675">
    <property type="entry name" value="Beta-grasp_dom_sf"/>
</dbReference>
<dbReference type="InterPro" id="IPR031167">
    <property type="entry name" value="G_OBG"/>
</dbReference>
<dbReference type="InterPro" id="IPR006073">
    <property type="entry name" value="GTP-bd"/>
</dbReference>
<dbReference type="InterPro" id="IPR027417">
    <property type="entry name" value="P-loop_NTPase"/>
</dbReference>
<dbReference type="InterPro" id="IPR004095">
    <property type="entry name" value="TGS"/>
</dbReference>
<dbReference type="InterPro" id="IPR012676">
    <property type="entry name" value="TGS-like"/>
</dbReference>
<dbReference type="InterPro" id="IPR023192">
    <property type="entry name" value="TGS-like_dom_sf"/>
</dbReference>
<dbReference type="InterPro" id="IPR013029">
    <property type="entry name" value="YchF_C"/>
</dbReference>
<dbReference type="InterPro" id="IPR041706">
    <property type="entry name" value="YchF_N"/>
</dbReference>
<dbReference type="NCBIfam" id="TIGR00092">
    <property type="entry name" value="redox-regulated ATPase YchF"/>
    <property type="match status" value="1"/>
</dbReference>
<dbReference type="PANTHER" id="PTHR23305">
    <property type="entry name" value="OBG GTPASE FAMILY"/>
    <property type="match status" value="1"/>
</dbReference>
<dbReference type="PANTHER" id="PTHR23305:SF11">
    <property type="entry name" value="OBG-LIKE ATPASE 1"/>
    <property type="match status" value="1"/>
</dbReference>
<dbReference type="Pfam" id="PF01926">
    <property type="entry name" value="MMR_HSR1"/>
    <property type="match status" value="1"/>
</dbReference>
<dbReference type="Pfam" id="PF06071">
    <property type="entry name" value="YchF-GTPase_C"/>
    <property type="match status" value="1"/>
</dbReference>
<dbReference type="PIRSF" id="PIRSF006641">
    <property type="entry name" value="CHP00092"/>
    <property type="match status" value="1"/>
</dbReference>
<dbReference type="PRINTS" id="PR00326">
    <property type="entry name" value="GTP1OBG"/>
</dbReference>
<dbReference type="SUPFAM" id="SSF52540">
    <property type="entry name" value="P-loop containing nucleoside triphosphate hydrolases"/>
    <property type="match status" value="1"/>
</dbReference>
<dbReference type="SUPFAM" id="SSF81271">
    <property type="entry name" value="TGS-like"/>
    <property type="match status" value="1"/>
</dbReference>
<dbReference type="PROSITE" id="PS51710">
    <property type="entry name" value="G_OBG"/>
    <property type="match status" value="1"/>
</dbReference>
<dbReference type="PROSITE" id="PS51880">
    <property type="entry name" value="TGS"/>
    <property type="match status" value="1"/>
</dbReference>
<accession>P38219</accession>
<accession>D6VQ27</accession>
<gene>
    <name evidence="2" type="primary">OLA1</name>
    <name type="ordered locus">YBR025C</name>
    <name type="ORF">YBR0309</name>
</gene>
<feature type="chain" id="PRO_0000122462" description="Obg-like ATPase 1">
    <location>
        <begin position="1"/>
        <end position="394"/>
    </location>
</feature>
<feature type="domain" description="OBG-type G">
    <location>
        <begin position="21"/>
        <end position="285"/>
    </location>
</feature>
<feature type="domain" description="TGS" evidence="3">
    <location>
        <begin position="306"/>
        <end position="389"/>
    </location>
</feature>
<feature type="binding site" evidence="2">
    <location>
        <begin position="30"/>
        <end position="35"/>
    </location>
    <ligand>
        <name>ATP</name>
        <dbReference type="ChEBI" id="CHEBI:30616"/>
    </ligand>
</feature>
<feature type="binding site" evidence="1">
    <location>
        <position position="34"/>
    </location>
    <ligand>
        <name>Mg(2+)</name>
        <dbReference type="ChEBI" id="CHEBI:18420"/>
    </ligand>
</feature>
<feature type="binding site" evidence="1">
    <location>
        <position position="55"/>
    </location>
    <ligand>
        <name>Mg(2+)</name>
        <dbReference type="ChEBI" id="CHEBI:18420"/>
    </ligand>
</feature>
<feature type="binding site" evidence="2">
    <location>
        <position position="233"/>
    </location>
    <ligand>
        <name>ATP</name>
        <dbReference type="ChEBI" id="CHEBI:30616"/>
    </ligand>
</feature>
<feature type="modified residue" description="Phosphothreonine" evidence="11">
    <location>
        <position position="89"/>
    </location>
</feature>
<feature type="modified residue" description="Phosphoserine" evidence="12">
    <location>
        <position position="116"/>
    </location>
</feature>
<feature type="modified residue" description="Phosphoserine" evidence="12">
    <location>
        <position position="119"/>
    </location>
</feature>
<feature type="cross-link" description="Glycyl lysine isopeptide (Lys-Gly) (interchain with G-Cter in ubiquitin)" evidence="13">
    <location>
        <position position="98"/>
    </location>
</feature>
<name>OLA1_YEAST</name>
<sequence>MPPKKQVEEKKVLLGRPGNNLKAGIVGLANVGKSTFFQAITRCPLGNPANYPFATIDPEEARVIVPSPRFDKLCEIYKKTASEVPAHLTVYDIAGLTKGASAGEGLGNAFLSHIRSVDSIYQVVRCFDDAEIIHVEGDVDPVRDLEIINQELRLKDIEFAQKALEGAEKIAKRGGQSLEVKQKKEEMDLITKIIKLLESGQRVANHSWTSKEVEIINSMFLLTAKPCIYLINLSERDYIRKKNKHLLRIKEWVDKYSPGDLIIPFSVSLEERLSHMSPEDAEEELKKLQTISALPKIITTMRQKLDLISFFTCGPDEVREWTIRRGTKAPQAAGVIHNDLMNTFILAQVMKCEDVFEYKDDSAIKAAGKLMQKGKDYVVEDGDIIYFRAGAGKN</sequence>